<comment type="function">
    <text evidence="1 7">Major lipase in white adipose tissue. Involved in the metabolism of xenobiotics and of natural substrates. Hydrolyzes triacylglycerols and monoacylglycerols, with a preference for monoacylglycerols. The susceptibility of the substrate increases with decreasing acyl chain length of the fatty acid moiety. Catalyzes the synthesis of fatty acid ethyl esters (PubMed:15220344). Hydrolyzes retinyl esters (By similarity).</text>
</comment>
<comment type="catalytic activity">
    <reaction evidence="5 8">
        <text>a carboxylic ester + H2O = an alcohol + a carboxylate + H(+)</text>
        <dbReference type="Rhea" id="RHEA:21164"/>
        <dbReference type="ChEBI" id="CHEBI:15377"/>
        <dbReference type="ChEBI" id="CHEBI:15378"/>
        <dbReference type="ChEBI" id="CHEBI:29067"/>
        <dbReference type="ChEBI" id="CHEBI:30879"/>
        <dbReference type="ChEBI" id="CHEBI:33308"/>
        <dbReference type="EC" id="3.1.1.1"/>
    </reaction>
</comment>
<comment type="catalytic activity">
    <reaction evidence="8">
        <text>a long-chain fatty acyl ethyl ester + H2O = a long-chain fatty acid + ethanol + H(+)</text>
        <dbReference type="Rhea" id="RHEA:16641"/>
        <dbReference type="ChEBI" id="CHEBI:13209"/>
        <dbReference type="ChEBI" id="CHEBI:15377"/>
        <dbReference type="ChEBI" id="CHEBI:15378"/>
        <dbReference type="ChEBI" id="CHEBI:16236"/>
        <dbReference type="ChEBI" id="CHEBI:57560"/>
        <dbReference type="EC" id="3.1.1.67"/>
    </reaction>
</comment>
<comment type="catalytic activity">
    <reaction evidence="1">
        <text>all-trans-retinyl hexadecanoate + H2O = all-trans-retinol + hexadecanoate + H(+)</text>
        <dbReference type="Rhea" id="RHEA:13933"/>
        <dbReference type="ChEBI" id="CHEBI:7896"/>
        <dbReference type="ChEBI" id="CHEBI:15377"/>
        <dbReference type="ChEBI" id="CHEBI:15378"/>
        <dbReference type="ChEBI" id="CHEBI:17336"/>
        <dbReference type="ChEBI" id="CHEBI:17616"/>
    </reaction>
    <physiologicalReaction direction="left-to-right" evidence="1">
        <dbReference type="Rhea" id="RHEA:13934"/>
    </physiologicalReaction>
</comment>
<comment type="subunit">
    <text evidence="8">Homotrimer.</text>
</comment>
<comment type="subcellular location">
    <subcellularLocation>
        <location evidence="7">Endoplasmic reticulum lumen</location>
    </subcellularLocation>
    <subcellularLocation>
        <location evidence="7">Cytoplasm</location>
        <location evidence="7">Cytosol</location>
    </subcellularLocation>
    <subcellularLocation>
        <location evidence="7">Lipid droplet</location>
    </subcellularLocation>
    <subcellularLocation>
        <location evidence="1">Microsome</location>
    </subcellularLocation>
</comment>
<comment type="tissue specificity">
    <text evidence="6 8">Highest expression occurs in liver with lower levels in adipose tissue, kidney, heart, intestine, lung, testis and thymus.</text>
</comment>
<comment type="induction">
    <text evidence="8">By di-(2-ethylhexyl) phthalate.</text>
</comment>
<comment type="similarity">
    <text evidence="4">Belongs to the type-B carboxylesterase/lipase family.</text>
</comment>
<comment type="caution">
    <text evidence="11">Was originally thought to originate from human.</text>
</comment>
<accession>Q8VCT4</accession>
<accession>Q91ZV9</accession>
<accession>Q924V8</accession>
<accession>Q9ULY1</accession>
<protein>
    <recommendedName>
        <fullName evidence="10">Carboxylesterase 1D</fullName>
    </recommendedName>
    <alternativeName>
        <fullName>Carboxylesterase 3</fullName>
        <ecNumber>3.1.1.1</ecNumber>
        <ecNumber>3.1.1.67</ecNumber>
    </alternativeName>
    <alternativeName>
        <fullName>Fatty acid ethyl ester synthase</fullName>
        <shortName>FAEE synthase</shortName>
    </alternativeName>
    <alternativeName>
        <fullName>Triacylglycerol hydrolase</fullName>
        <shortName>TGH</shortName>
    </alternativeName>
</protein>
<proteinExistence type="evidence at protein level"/>
<evidence type="ECO:0000250" key="1">
    <source>
        <dbReference type="UniProtKB" id="P16303"/>
    </source>
</evidence>
<evidence type="ECO:0000250" key="2">
    <source>
        <dbReference type="UniProtKB" id="P22303"/>
    </source>
</evidence>
<evidence type="ECO:0000250" key="3">
    <source>
        <dbReference type="UniProtKB" id="P23141"/>
    </source>
</evidence>
<evidence type="ECO:0000255" key="4"/>
<evidence type="ECO:0000255" key="5">
    <source>
        <dbReference type="PROSITE-ProRule" id="PRU10039"/>
    </source>
</evidence>
<evidence type="ECO:0000269" key="6">
    <source>
    </source>
</evidence>
<evidence type="ECO:0000269" key="7">
    <source>
    </source>
</evidence>
<evidence type="ECO:0000269" key="8">
    <source>
    </source>
</evidence>
<evidence type="ECO:0000303" key="9">
    <source>
    </source>
</evidence>
<evidence type="ECO:0000305" key="10"/>
<evidence type="ECO:0000305" key="11">
    <source>
    </source>
</evidence>
<evidence type="ECO:0000312" key="12">
    <source>
        <dbReference type="EMBL" id="AAH19198.1"/>
    </source>
</evidence>
<evidence type="ECO:0000312" key="13">
    <source>
        <dbReference type="EMBL" id="AAK58067.1"/>
    </source>
</evidence>
<evidence type="ECO:0000312" key="14">
    <source>
        <dbReference type="EMBL" id="BAA84996.1"/>
    </source>
</evidence>
<evidence type="ECO:0000312" key="15">
    <source>
        <dbReference type="EMBL" id="BAB60698.1"/>
    </source>
</evidence>
<evidence type="ECO:0000312" key="16">
    <source>
        <dbReference type="MGI" id="MGI:2148202"/>
    </source>
</evidence>
<evidence type="ECO:0007744" key="17">
    <source>
    </source>
</evidence>
<dbReference type="EC" id="3.1.1.1"/>
<dbReference type="EC" id="3.1.1.67"/>
<dbReference type="EMBL" id="AB025028">
    <property type="protein sequence ID" value="BAA84996.1"/>
    <property type="molecule type" value="mRNA"/>
</dbReference>
<dbReference type="EMBL" id="AF378751">
    <property type="protein sequence ID" value="AAK58067.1"/>
    <property type="molecule type" value="mRNA"/>
</dbReference>
<dbReference type="EMBL" id="AB023631">
    <property type="protein sequence ID" value="BAB60698.1"/>
    <property type="molecule type" value="mRNA"/>
</dbReference>
<dbReference type="EMBL" id="AK078879">
    <property type="protein sequence ID" value="BAC37439.1"/>
    <property type="molecule type" value="mRNA"/>
</dbReference>
<dbReference type="EMBL" id="BC019198">
    <property type="protein sequence ID" value="AAH19198.1"/>
    <property type="molecule type" value="mRNA"/>
</dbReference>
<dbReference type="CCDS" id="CCDS22528.1"/>
<dbReference type="RefSeq" id="NP_444430.2">
    <property type="nucleotide sequence ID" value="NM_053200.2"/>
</dbReference>
<dbReference type="SMR" id="Q8VCT4"/>
<dbReference type="FunCoup" id="Q8VCT4">
    <property type="interactions" value="431"/>
</dbReference>
<dbReference type="IntAct" id="Q8VCT4">
    <property type="interactions" value="1"/>
</dbReference>
<dbReference type="STRING" id="10090.ENSMUSP00000034172"/>
<dbReference type="BindingDB" id="Q8VCT4"/>
<dbReference type="ChEMBL" id="CHEMBL3137293"/>
<dbReference type="ESTHER" id="mouse-Ces1d">
    <property type="family name" value="Carb_B_Chordata"/>
</dbReference>
<dbReference type="MEROPS" id="S09.983"/>
<dbReference type="CarbonylDB" id="Q8VCT4"/>
<dbReference type="GlyCosmos" id="Q8VCT4">
    <property type="glycosylation" value="2 sites, No reported glycans"/>
</dbReference>
<dbReference type="GlyGen" id="Q8VCT4">
    <property type="glycosylation" value="3 sites, 2 N-linked glycans (2 sites), 1 O-linked glycan (1 site)"/>
</dbReference>
<dbReference type="iPTMnet" id="Q8VCT4"/>
<dbReference type="PhosphoSitePlus" id="Q8VCT4"/>
<dbReference type="SwissPalm" id="Q8VCT4"/>
<dbReference type="CPTAC" id="non-CPTAC-3408"/>
<dbReference type="jPOST" id="Q8VCT4"/>
<dbReference type="PaxDb" id="10090-ENSMUSP00000034172"/>
<dbReference type="PeptideAtlas" id="Q8VCT4"/>
<dbReference type="ProteomicsDB" id="281592"/>
<dbReference type="DNASU" id="104158"/>
<dbReference type="Ensembl" id="ENSMUST00000034172.8">
    <property type="protein sequence ID" value="ENSMUSP00000034172.8"/>
    <property type="gene ID" value="ENSMUSG00000056973.7"/>
</dbReference>
<dbReference type="GeneID" id="104158"/>
<dbReference type="KEGG" id="mmu:104158"/>
<dbReference type="UCSC" id="uc009mun.1">
    <property type="organism name" value="mouse"/>
</dbReference>
<dbReference type="AGR" id="MGI:2148202"/>
<dbReference type="CTD" id="104158"/>
<dbReference type="MGI" id="MGI:2148202">
    <property type="gene designation" value="Ces1d"/>
</dbReference>
<dbReference type="VEuPathDB" id="HostDB:ENSMUSG00000056973"/>
<dbReference type="eggNOG" id="KOG1516">
    <property type="taxonomic scope" value="Eukaryota"/>
</dbReference>
<dbReference type="GeneTree" id="ENSGT00940000154623"/>
<dbReference type="HOGENOM" id="CLU_006586_13_0_1"/>
<dbReference type="InParanoid" id="Q8VCT4"/>
<dbReference type="OMA" id="PAEPWIF"/>
<dbReference type="OrthoDB" id="3200163at2759"/>
<dbReference type="PhylomeDB" id="Q8VCT4"/>
<dbReference type="TreeFam" id="TF315470"/>
<dbReference type="BRENDA" id="3.1.1.1">
    <property type="organism ID" value="3474"/>
</dbReference>
<dbReference type="Reactome" id="R-MMU-2022377">
    <property type="pathway name" value="Metabolism of Angiotensinogen to Angiotensins"/>
</dbReference>
<dbReference type="Reactome" id="R-MMU-211945">
    <property type="pathway name" value="Phase I - Functionalization of compounds"/>
</dbReference>
<dbReference type="Reactome" id="R-MMU-5578768">
    <property type="pathway name" value="Physiological factors"/>
</dbReference>
<dbReference type="Reactome" id="R-MMU-9749641">
    <property type="pathway name" value="Aspirin ADME"/>
</dbReference>
<dbReference type="BioGRID-ORCS" id="104158">
    <property type="hits" value="4 hits in 80 CRISPR screens"/>
</dbReference>
<dbReference type="ChiTaRS" id="Ces1d">
    <property type="organism name" value="mouse"/>
</dbReference>
<dbReference type="PRO" id="PR:Q8VCT4"/>
<dbReference type="Proteomes" id="UP000000589">
    <property type="component" value="Chromosome 8"/>
</dbReference>
<dbReference type="RNAct" id="Q8VCT4">
    <property type="molecule type" value="protein"/>
</dbReference>
<dbReference type="Bgee" id="ENSMUSG00000056973">
    <property type="expression patterns" value="Expressed in gonadal fat pad and 169 other cell types or tissues"/>
</dbReference>
<dbReference type="GO" id="GO:0005829">
    <property type="term" value="C:cytosol"/>
    <property type="evidence" value="ECO:0000314"/>
    <property type="project" value="UniProtKB"/>
</dbReference>
<dbReference type="GO" id="GO:0005783">
    <property type="term" value="C:endoplasmic reticulum"/>
    <property type="evidence" value="ECO:0000314"/>
    <property type="project" value="MGI"/>
</dbReference>
<dbReference type="GO" id="GO:0005788">
    <property type="term" value="C:endoplasmic reticulum lumen"/>
    <property type="evidence" value="ECO:0000314"/>
    <property type="project" value="UniProtKB"/>
</dbReference>
<dbReference type="GO" id="GO:0005811">
    <property type="term" value="C:lipid droplet"/>
    <property type="evidence" value="ECO:0000314"/>
    <property type="project" value="UniProtKB"/>
</dbReference>
<dbReference type="GO" id="GO:0047376">
    <property type="term" value="F:all-trans-retinyl-palmitate hydrolase, all-trans-retinol forming activity"/>
    <property type="evidence" value="ECO:0007669"/>
    <property type="project" value="RHEA"/>
</dbReference>
<dbReference type="GO" id="GO:0106435">
    <property type="term" value="F:carboxylesterase activity"/>
    <property type="evidence" value="ECO:0000315"/>
    <property type="project" value="MGI"/>
</dbReference>
<dbReference type="GO" id="GO:0052689">
    <property type="term" value="F:carboxylic ester hydrolase activity"/>
    <property type="evidence" value="ECO:0000314"/>
    <property type="project" value="UniProtKB"/>
</dbReference>
<dbReference type="GO" id="GO:0030339">
    <property type="term" value="F:fatty-acyl-ethyl-ester synthase activity"/>
    <property type="evidence" value="ECO:0007669"/>
    <property type="project" value="UniProtKB-EC"/>
</dbReference>
<dbReference type="GO" id="GO:0004771">
    <property type="term" value="F:sterol ester esterase activity"/>
    <property type="evidence" value="ECO:0000314"/>
    <property type="project" value="UniProtKB"/>
</dbReference>
<dbReference type="GO" id="GO:0004806">
    <property type="term" value="F:triacylglycerol lipase activity"/>
    <property type="evidence" value="ECO:0000314"/>
    <property type="project" value="UniProtKB"/>
</dbReference>
<dbReference type="GO" id="GO:0006637">
    <property type="term" value="P:acyl-CoA metabolic process"/>
    <property type="evidence" value="ECO:0000304"/>
    <property type="project" value="ProtInc"/>
</dbReference>
<dbReference type="GO" id="GO:0046464">
    <property type="term" value="P:acylglycerol catabolic process"/>
    <property type="evidence" value="ECO:0000314"/>
    <property type="project" value="UniProtKB"/>
</dbReference>
<dbReference type="GO" id="GO:0070417">
    <property type="term" value="P:cellular response to cold"/>
    <property type="evidence" value="ECO:0000315"/>
    <property type="project" value="MGI"/>
</dbReference>
<dbReference type="GO" id="GO:0060086">
    <property type="term" value="P:circadian temperature homeostasis"/>
    <property type="evidence" value="ECO:0000315"/>
    <property type="project" value="MGI"/>
</dbReference>
<dbReference type="GO" id="GO:0106106">
    <property type="term" value="P:cold-induced thermogenesis"/>
    <property type="evidence" value="ECO:0000315"/>
    <property type="project" value="MGI"/>
</dbReference>
<dbReference type="GO" id="GO:0061725">
    <property type="term" value="P:cytosolic lipolysis"/>
    <property type="evidence" value="ECO:0000315"/>
    <property type="project" value="MGI"/>
</dbReference>
<dbReference type="GO" id="GO:0016042">
    <property type="term" value="P:lipid catabolic process"/>
    <property type="evidence" value="ECO:0000314"/>
    <property type="project" value="MGI"/>
</dbReference>
<dbReference type="GO" id="GO:0045944">
    <property type="term" value="P:positive regulation of transcription by RNA polymerase II"/>
    <property type="evidence" value="ECO:0000315"/>
    <property type="project" value="MGI"/>
</dbReference>
<dbReference type="GO" id="GO:0009636">
    <property type="term" value="P:response to toxic substance"/>
    <property type="evidence" value="ECO:0000304"/>
    <property type="project" value="ProtInc"/>
</dbReference>
<dbReference type="GO" id="GO:0019626">
    <property type="term" value="P:short-chain fatty acid catabolic process"/>
    <property type="evidence" value="ECO:0000314"/>
    <property type="project" value="MGI"/>
</dbReference>
<dbReference type="GO" id="GO:0034379">
    <property type="term" value="P:very-low-density lipoprotein particle assembly"/>
    <property type="evidence" value="ECO:0000315"/>
    <property type="project" value="MGI"/>
</dbReference>
<dbReference type="CDD" id="cd00312">
    <property type="entry name" value="Esterase_lipase"/>
    <property type="match status" value="1"/>
</dbReference>
<dbReference type="FunFam" id="3.40.50.1820:FF:000011">
    <property type="entry name" value="Carboxylic ester hydrolase"/>
    <property type="match status" value="1"/>
</dbReference>
<dbReference type="Gene3D" id="3.40.50.1820">
    <property type="entry name" value="alpha/beta hydrolase"/>
    <property type="match status" value="1"/>
</dbReference>
<dbReference type="InterPro" id="IPR029058">
    <property type="entry name" value="AB_hydrolase_fold"/>
</dbReference>
<dbReference type="InterPro" id="IPR002018">
    <property type="entry name" value="CarbesteraseB"/>
</dbReference>
<dbReference type="InterPro" id="IPR019826">
    <property type="entry name" value="Carboxylesterase_B_AS"/>
</dbReference>
<dbReference type="InterPro" id="IPR019819">
    <property type="entry name" value="Carboxylesterase_B_CS"/>
</dbReference>
<dbReference type="InterPro" id="IPR050309">
    <property type="entry name" value="Type-B_Carboxylest/Lipase"/>
</dbReference>
<dbReference type="PANTHER" id="PTHR11559">
    <property type="entry name" value="CARBOXYLESTERASE"/>
    <property type="match status" value="1"/>
</dbReference>
<dbReference type="Pfam" id="PF00135">
    <property type="entry name" value="COesterase"/>
    <property type="match status" value="1"/>
</dbReference>
<dbReference type="SUPFAM" id="SSF53474">
    <property type="entry name" value="alpha/beta-Hydrolases"/>
    <property type="match status" value="1"/>
</dbReference>
<dbReference type="PROSITE" id="PS00122">
    <property type="entry name" value="CARBOXYLESTERASE_B_1"/>
    <property type="match status" value="1"/>
</dbReference>
<dbReference type="PROSITE" id="PS00941">
    <property type="entry name" value="CARBOXYLESTERASE_B_2"/>
    <property type="match status" value="1"/>
</dbReference>
<reference evidence="10 14" key="1">
    <citation type="journal article" date="1999" name="FEBS Lett.">
        <title>cDNA cloning, characterization and stable expression of novel human brain carboxylesterase.</title>
        <authorList>
            <person name="Mori M."/>
            <person name="Hosokawa M."/>
            <person name="Ogasawara Y."/>
            <person name="Tsukada E."/>
            <person name="Chiba K."/>
        </authorList>
    </citation>
    <scope>NUCLEOTIDE SEQUENCE [MRNA]</scope>
</reference>
<reference evidence="10 13" key="2">
    <citation type="journal article" date="2001" name="Biochim. Biophys. Acta">
        <title>The cloning and expression of a murine triacylglycerol hydrolase cDNA and the structure of its corresponding gene.</title>
        <authorList>
            <person name="Dolinsky V.W."/>
            <person name="Sipione S."/>
            <person name="Lehner R."/>
            <person name="Vance D.E."/>
        </authorList>
    </citation>
    <scope>NUCLEOTIDE SEQUENCE [MRNA]</scope>
    <scope>TISSUE SPECIFICITY</scope>
    <source>
        <strain evidence="13">129/J</strain>
        <tissue evidence="13">Liver</tissue>
    </source>
</reference>
<reference evidence="10 15" key="3">
    <citation type="journal article" date="2004" name="Drug Metab. Dispos.">
        <title>Identification of di-(2-ethylhexyl) phthalate-induced carboxylesterase 1 in C57BL/6 mouse liver microsomes: purification, cDNA cloning, and baculovirus-mediated expression.</title>
        <authorList>
            <person name="Furihata T."/>
            <person name="Hosokawa M."/>
            <person name="Koyano N."/>
            <person name="Nakamura T."/>
            <person name="Satoh T."/>
            <person name="Chiba K."/>
        </authorList>
    </citation>
    <scope>NUCLEOTIDE SEQUENCE [MRNA]</scope>
    <scope>PROTEIN SEQUENCE OF 19-38</scope>
    <scope>CATALYTIC ACTIVITY</scope>
    <scope>SUBUNIT</scope>
    <scope>TISSUE SPECIFICITY</scope>
    <scope>INDUCTION</scope>
    <source>
        <strain evidence="15">C57BL/6J</strain>
        <tissue evidence="15">Liver</tissue>
    </source>
</reference>
<reference key="4">
    <citation type="journal article" date="2005" name="Science">
        <title>The transcriptional landscape of the mammalian genome.</title>
        <authorList>
            <person name="Carninci P."/>
            <person name="Kasukawa T."/>
            <person name="Katayama S."/>
            <person name="Gough J."/>
            <person name="Frith M.C."/>
            <person name="Maeda N."/>
            <person name="Oyama R."/>
            <person name="Ravasi T."/>
            <person name="Lenhard B."/>
            <person name="Wells C."/>
            <person name="Kodzius R."/>
            <person name="Shimokawa K."/>
            <person name="Bajic V.B."/>
            <person name="Brenner S.E."/>
            <person name="Batalov S."/>
            <person name="Forrest A.R."/>
            <person name="Zavolan M."/>
            <person name="Davis M.J."/>
            <person name="Wilming L.G."/>
            <person name="Aidinis V."/>
            <person name="Allen J.E."/>
            <person name="Ambesi-Impiombato A."/>
            <person name="Apweiler R."/>
            <person name="Aturaliya R.N."/>
            <person name="Bailey T.L."/>
            <person name="Bansal M."/>
            <person name="Baxter L."/>
            <person name="Beisel K.W."/>
            <person name="Bersano T."/>
            <person name="Bono H."/>
            <person name="Chalk A.M."/>
            <person name="Chiu K.P."/>
            <person name="Choudhary V."/>
            <person name="Christoffels A."/>
            <person name="Clutterbuck D.R."/>
            <person name="Crowe M.L."/>
            <person name="Dalla E."/>
            <person name="Dalrymple B.P."/>
            <person name="de Bono B."/>
            <person name="Della Gatta G."/>
            <person name="di Bernardo D."/>
            <person name="Down T."/>
            <person name="Engstrom P."/>
            <person name="Fagiolini M."/>
            <person name="Faulkner G."/>
            <person name="Fletcher C.F."/>
            <person name="Fukushima T."/>
            <person name="Furuno M."/>
            <person name="Futaki S."/>
            <person name="Gariboldi M."/>
            <person name="Georgii-Hemming P."/>
            <person name="Gingeras T.R."/>
            <person name="Gojobori T."/>
            <person name="Green R.E."/>
            <person name="Gustincich S."/>
            <person name="Harbers M."/>
            <person name="Hayashi Y."/>
            <person name="Hensch T.K."/>
            <person name="Hirokawa N."/>
            <person name="Hill D."/>
            <person name="Huminiecki L."/>
            <person name="Iacono M."/>
            <person name="Ikeo K."/>
            <person name="Iwama A."/>
            <person name="Ishikawa T."/>
            <person name="Jakt M."/>
            <person name="Kanapin A."/>
            <person name="Katoh M."/>
            <person name="Kawasawa Y."/>
            <person name="Kelso J."/>
            <person name="Kitamura H."/>
            <person name="Kitano H."/>
            <person name="Kollias G."/>
            <person name="Krishnan S.P."/>
            <person name="Kruger A."/>
            <person name="Kummerfeld S.K."/>
            <person name="Kurochkin I.V."/>
            <person name="Lareau L.F."/>
            <person name="Lazarevic D."/>
            <person name="Lipovich L."/>
            <person name="Liu J."/>
            <person name="Liuni S."/>
            <person name="McWilliam S."/>
            <person name="Madan Babu M."/>
            <person name="Madera M."/>
            <person name="Marchionni L."/>
            <person name="Matsuda H."/>
            <person name="Matsuzawa S."/>
            <person name="Miki H."/>
            <person name="Mignone F."/>
            <person name="Miyake S."/>
            <person name="Morris K."/>
            <person name="Mottagui-Tabar S."/>
            <person name="Mulder N."/>
            <person name="Nakano N."/>
            <person name="Nakauchi H."/>
            <person name="Ng P."/>
            <person name="Nilsson R."/>
            <person name="Nishiguchi S."/>
            <person name="Nishikawa S."/>
            <person name="Nori F."/>
            <person name="Ohara O."/>
            <person name="Okazaki Y."/>
            <person name="Orlando V."/>
            <person name="Pang K.C."/>
            <person name="Pavan W.J."/>
            <person name="Pavesi G."/>
            <person name="Pesole G."/>
            <person name="Petrovsky N."/>
            <person name="Piazza S."/>
            <person name="Reed J."/>
            <person name="Reid J.F."/>
            <person name="Ring B.Z."/>
            <person name="Ringwald M."/>
            <person name="Rost B."/>
            <person name="Ruan Y."/>
            <person name="Salzberg S.L."/>
            <person name="Sandelin A."/>
            <person name="Schneider C."/>
            <person name="Schoenbach C."/>
            <person name="Sekiguchi K."/>
            <person name="Semple C.A."/>
            <person name="Seno S."/>
            <person name="Sessa L."/>
            <person name="Sheng Y."/>
            <person name="Shibata Y."/>
            <person name="Shimada H."/>
            <person name="Shimada K."/>
            <person name="Silva D."/>
            <person name="Sinclair B."/>
            <person name="Sperling S."/>
            <person name="Stupka E."/>
            <person name="Sugiura K."/>
            <person name="Sultana R."/>
            <person name="Takenaka Y."/>
            <person name="Taki K."/>
            <person name="Tammoja K."/>
            <person name="Tan S.L."/>
            <person name="Tang S."/>
            <person name="Taylor M.S."/>
            <person name="Tegner J."/>
            <person name="Teichmann S.A."/>
            <person name="Ueda H.R."/>
            <person name="van Nimwegen E."/>
            <person name="Verardo R."/>
            <person name="Wei C.L."/>
            <person name="Yagi K."/>
            <person name="Yamanishi H."/>
            <person name="Zabarovsky E."/>
            <person name="Zhu S."/>
            <person name="Zimmer A."/>
            <person name="Hide W."/>
            <person name="Bult C."/>
            <person name="Grimmond S.M."/>
            <person name="Teasdale R.D."/>
            <person name="Liu E.T."/>
            <person name="Brusic V."/>
            <person name="Quackenbush J."/>
            <person name="Wahlestedt C."/>
            <person name="Mattick J.S."/>
            <person name="Hume D.A."/>
            <person name="Kai C."/>
            <person name="Sasaki D."/>
            <person name="Tomaru Y."/>
            <person name="Fukuda S."/>
            <person name="Kanamori-Katayama M."/>
            <person name="Suzuki M."/>
            <person name="Aoki J."/>
            <person name="Arakawa T."/>
            <person name="Iida J."/>
            <person name="Imamura K."/>
            <person name="Itoh M."/>
            <person name="Kato T."/>
            <person name="Kawaji H."/>
            <person name="Kawagashira N."/>
            <person name="Kawashima T."/>
            <person name="Kojima M."/>
            <person name="Kondo S."/>
            <person name="Konno H."/>
            <person name="Nakano K."/>
            <person name="Ninomiya N."/>
            <person name="Nishio T."/>
            <person name="Okada M."/>
            <person name="Plessy C."/>
            <person name="Shibata K."/>
            <person name="Shiraki T."/>
            <person name="Suzuki S."/>
            <person name="Tagami M."/>
            <person name="Waki K."/>
            <person name="Watahiki A."/>
            <person name="Okamura-Oho Y."/>
            <person name="Suzuki H."/>
            <person name="Kawai J."/>
            <person name="Hayashizaki Y."/>
        </authorList>
    </citation>
    <scope>NUCLEOTIDE SEQUENCE [LARGE SCALE MRNA]</scope>
    <source>
        <strain>C57BL/6J</strain>
        <tissue>Colon</tissue>
    </source>
</reference>
<reference evidence="12" key="5">
    <citation type="journal article" date="2004" name="Genome Res.">
        <title>The status, quality, and expansion of the NIH full-length cDNA project: the Mammalian Gene Collection (MGC).</title>
        <authorList>
            <consortium name="The MGC Project Team"/>
        </authorList>
    </citation>
    <scope>NUCLEOTIDE SEQUENCE [LARGE SCALE MRNA]</scope>
    <source>
        <strain evidence="12">FVB/N</strain>
        <tissue evidence="12">Kidney</tissue>
    </source>
</reference>
<reference key="6">
    <citation type="journal article" date="2004" name="J. Biol. Chem.">
        <title>Carboxylesterase 3 (EC 3.1.1.1) is a major adipocyte lipase.</title>
        <authorList>
            <person name="Soni K.G."/>
            <person name="Lehner R."/>
            <person name="Metalnikov P."/>
            <person name="O'Donnell P."/>
            <person name="Semache M."/>
            <person name="Gao W."/>
            <person name="Ashman K."/>
            <person name="Pshezhetsky A.V."/>
            <person name="Mitchell G.A."/>
        </authorList>
    </citation>
    <scope>PROTEIN SEQUENCE OF 331-337 AND 390-398</scope>
    <scope>FUNCTION</scope>
    <scope>LIPASE AND NEUTRAL CHOLESTERYL ESTER HYDROLASE ACTIVITIES</scope>
    <scope>SUBCELLULAR LOCATION</scope>
</reference>
<reference key="7">
    <citation type="journal article" date="2010" name="Cell">
        <title>A tissue-specific atlas of mouse protein phosphorylation and expression.</title>
        <authorList>
            <person name="Huttlin E.L."/>
            <person name="Jedrychowski M.P."/>
            <person name="Elias J.E."/>
            <person name="Goswami T."/>
            <person name="Rad R."/>
            <person name="Beausoleil S.A."/>
            <person name="Villen J."/>
            <person name="Haas W."/>
            <person name="Sowa M.E."/>
            <person name="Gygi S.P."/>
        </authorList>
    </citation>
    <scope>IDENTIFICATION BY MASS SPECTROMETRY [LARGE SCALE ANALYSIS]</scope>
    <source>
        <tissue>Brown adipose tissue</tissue>
        <tissue>Heart</tissue>
        <tissue>Kidney</tissue>
        <tissue>Liver</tissue>
        <tissue>Lung</tissue>
        <tissue>Pancreas</tissue>
        <tissue>Testis</tissue>
    </source>
</reference>
<reference key="8">
    <citation type="journal article" date="2013" name="Mol. Cell">
        <title>SIRT5-mediated lysine desuccinylation impacts diverse metabolic pathways.</title>
        <authorList>
            <person name="Park J."/>
            <person name="Chen Y."/>
            <person name="Tishkoff D.X."/>
            <person name="Peng C."/>
            <person name="Tan M."/>
            <person name="Dai L."/>
            <person name="Xie Z."/>
            <person name="Zhang Y."/>
            <person name="Zwaans B.M."/>
            <person name="Skinner M.E."/>
            <person name="Lombard D.B."/>
            <person name="Zhao Y."/>
        </authorList>
    </citation>
    <scope>SUCCINYLATION [LARGE SCALE ANALYSIS] AT LYS-382</scope>
    <scope>IDENTIFICATION BY MASS SPECTROMETRY [LARGE SCALE ANALYSIS]</scope>
    <source>
        <tissue>Liver</tissue>
    </source>
</reference>
<name>EST1D_MOUSE</name>
<feature type="signal peptide" evidence="8">
    <location>
        <begin position="1"/>
        <end position="18"/>
    </location>
</feature>
<feature type="chain" id="PRO_0000008583" description="Carboxylesterase 1D">
    <location>
        <begin position="19"/>
        <end position="565"/>
    </location>
</feature>
<feature type="short sequence motif" description="Prevents secretion from ER" evidence="4">
    <location>
        <begin position="562"/>
        <end position="565"/>
    </location>
</feature>
<feature type="active site" description="Acyl-ester intermediate" evidence="2 5">
    <location>
        <position position="221"/>
    </location>
</feature>
<feature type="active site" description="Charge relay system" evidence="2">
    <location>
        <position position="353"/>
    </location>
</feature>
<feature type="active site" description="Charge relay system" evidence="2">
    <location>
        <position position="466"/>
    </location>
</feature>
<feature type="modified residue" description="N6-succinyllysine" evidence="17">
    <location>
        <position position="382"/>
    </location>
</feature>
<feature type="glycosylation site" description="N-linked (GlcNAc...) asparagine" evidence="3">
    <location>
        <position position="79"/>
    </location>
</feature>
<feature type="glycosylation site" description="N-linked (GlcNAc...) asparagine" evidence="4">
    <location>
        <position position="489"/>
    </location>
</feature>
<feature type="disulfide bond" evidence="3">
    <location>
        <begin position="87"/>
        <end position="116"/>
    </location>
</feature>
<feature type="disulfide bond" evidence="3">
    <location>
        <begin position="273"/>
        <end position="284"/>
    </location>
</feature>
<feature type="sequence conflict" description="In Ref. 1; BAA84996 and 2; AAK58067." evidence="10" ref="1 2">
    <original>G</original>
    <variation>R</variation>
    <location>
        <position position="2"/>
    </location>
</feature>
<feature type="sequence conflict" description="In Ref. 1; BAA84996." evidence="10" ref="1">
    <original>V</original>
    <variation>F</variation>
    <location>
        <position position="49"/>
    </location>
</feature>
<feature type="sequence conflict" description="In Ref. 1; BAA84996." evidence="10" ref="1">
    <original>G</original>
    <variation>W</variation>
    <location>
        <position position="94"/>
    </location>
</feature>
<feature type="sequence conflict" description="In Ref. 3; BAB60698." evidence="10" ref="3">
    <original>D</original>
    <variation>H</variation>
    <location>
        <position position="407"/>
    </location>
</feature>
<feature type="sequence conflict" description="In Ref. 1; BAA84996." evidence="10" ref="1">
    <original>AMR</original>
    <variation>RHED</variation>
    <location>
        <begin position="456"/>
        <end position="458"/>
    </location>
</feature>
<feature type="sequence conflict" description="In Ref. 1; BAA84996." evidence="10" ref="1">
    <original>EYDQ</original>
    <variation>RNMTK</variation>
    <location>
        <begin position="517"/>
        <end position="520"/>
    </location>
</feature>
<organism>
    <name type="scientific">Mus musculus</name>
    <name type="common">Mouse</name>
    <dbReference type="NCBI Taxonomy" id="10090"/>
    <lineage>
        <taxon>Eukaryota</taxon>
        <taxon>Metazoa</taxon>
        <taxon>Chordata</taxon>
        <taxon>Craniata</taxon>
        <taxon>Vertebrata</taxon>
        <taxon>Euteleostomi</taxon>
        <taxon>Mammalia</taxon>
        <taxon>Eutheria</taxon>
        <taxon>Euarchontoglires</taxon>
        <taxon>Glires</taxon>
        <taxon>Rodentia</taxon>
        <taxon>Myomorpha</taxon>
        <taxon>Muroidea</taxon>
        <taxon>Muridae</taxon>
        <taxon>Murinae</taxon>
        <taxon>Mus</taxon>
        <taxon>Mus</taxon>
    </lineage>
</organism>
<gene>
    <name evidence="16" type="primary">Ces1d</name>
    <name evidence="9" type="synonym">Ces1</name>
    <name type="synonym">Ces3</name>
</gene>
<keyword id="KW-0963">Cytoplasm</keyword>
<keyword id="KW-0903">Direct protein sequencing</keyword>
<keyword id="KW-1015">Disulfide bond</keyword>
<keyword id="KW-0256">Endoplasmic reticulum</keyword>
<keyword id="KW-0325">Glycoprotein</keyword>
<keyword id="KW-0378">Hydrolase</keyword>
<keyword id="KW-0442">Lipid degradation</keyword>
<keyword id="KW-0551">Lipid droplet</keyword>
<keyword id="KW-0443">Lipid metabolism</keyword>
<keyword id="KW-0492">Microsome</keyword>
<keyword id="KW-1185">Reference proteome</keyword>
<keyword id="KW-0719">Serine esterase</keyword>
<keyword id="KW-0732">Signal</keyword>
<sequence length="565" mass="61788">MGLYPLIWLSLAACTAWGYPSSPPVVNTVKGKVLGKYVNLEGFTQPVAVFLGVPFAKPPLGSLRFAPPQPAEPWSFVKNTTSYPPMCSQDAVGGQVLSELFTNRKENIPLQFSEDCLYLNIYTPADLTKNSRLPVMVWIHGGGLVVGGASTYDGLALSAHENVVVVTIQYRLGIWGFFSTGDEHSRGNWGHLDQVAALRWVQDNIANFGGNPGSVTIFGESAGGFSVSVLVLSPLAKNLFHRAISESGVSLTAALITTDVKPIAGLVATLSGCKTTTSAVMVHCLRQKTEDELLETSLKLNLFKLDLLGNPKESYPFLPTVIDGVVLPKAPEEILAEKSFSTVPYIVGINKQEFGWIIPTLMGYPLAEGKLDQKTANSLLWKSYPTLKISENMIPVVAEKYLGGTDDLTKKKDLFQDLMADVVFGVPSVIVSRSHRDAGASTYMYEFEYRPSFVSAMRPKAVIGDHGDEIFSVFGSPFLKDGASEEETNLSKMVMKFWANFARNGNPNGGGLPHWPEYDQKEGYLKIGASTQAAQRLKDKEVSFWAELRAKESAQRPSHREHVEL</sequence>